<reference key="1">
    <citation type="submission" date="2004-11" db="EMBL/GenBank/DDBJ databases">
        <authorList>
            <consortium name="The German cDNA consortium"/>
        </authorList>
    </citation>
    <scope>NUCLEOTIDE SEQUENCE [LARGE SCALE MRNA]</scope>
    <source>
        <tissue>Brain cortex</tissue>
    </source>
</reference>
<protein>
    <recommendedName>
        <fullName evidence="5">Heparan sulfate 2-O-sulfotransferase 1</fullName>
        <ecNumber evidence="6">2.8.2.-</ecNumber>
    </recommendedName>
    <alternativeName>
        <fullName evidence="6">2-O-sulfotransferase</fullName>
        <shortName evidence="6">2-OST</shortName>
        <shortName evidence="4">2OST</shortName>
    </alternativeName>
    <alternativeName>
        <fullName evidence="6">HS 2-O-sulfotransferase</fullName>
    </alternativeName>
    <alternativeName>
        <fullName evidence="6">Heparan sulfate 2-sulfotransferase</fullName>
    </alternativeName>
</protein>
<sequence length="356" mass="41913">MGLLRIMMPPKLQLLAVVAFAVAMLFLENQIQKLEESRSKLERAIARHEVREIEQRHTMDGPRQDATLDEEEDMVIIYNRVPKTASTSFTNIAYDLCAKNKYHVLHINTTKNNPVMSLQDQMRFVKNITSWKEMKPGFYHGHVSYLDFAKFGVKKKPIYINVIRDPIERLVSYYYFLRFGDDYRPGLRRRKQGDKKTFDECVAEGGSDCAPEKLWLQIPFFCGHSSECWNVGSRWAMDQAKYNLINEYFLVGVTEELEDFIMLLEAALPRFFRGATELYRTGKKSHLRKTTEKKLPTKQTIAKLQQSDIWKMENEFYEFALEQFQFIRAHAVREKDGDLYILAQNFFYEKIYPKSN</sequence>
<evidence type="ECO:0000250" key="1"/>
<evidence type="ECO:0000250" key="2">
    <source>
        <dbReference type="UniProtKB" id="A0A8C2LVE3"/>
    </source>
</evidence>
<evidence type="ECO:0000250" key="3">
    <source>
        <dbReference type="UniProtKB" id="O08889"/>
    </source>
</evidence>
<evidence type="ECO:0000250" key="4">
    <source>
        <dbReference type="UniProtKB" id="Q76KB1"/>
    </source>
</evidence>
<evidence type="ECO:0000250" key="5">
    <source>
        <dbReference type="UniProtKB" id="Q7LGA3"/>
    </source>
</evidence>
<evidence type="ECO:0000250" key="6">
    <source>
        <dbReference type="UniProtKB" id="Q8R3H7"/>
    </source>
</evidence>
<evidence type="ECO:0000255" key="7"/>
<evidence type="ECO:0000305" key="8"/>
<evidence type="ECO:0000312" key="9">
    <source>
        <dbReference type="Proteomes" id="UP000001595"/>
    </source>
</evidence>
<feature type="chain" id="PRO_0000207676" description="Heparan sulfate 2-O-sulfotransferase 1">
    <location>
        <begin position="1"/>
        <end position="356"/>
    </location>
</feature>
<feature type="topological domain" description="Cytoplasmic" evidence="7">
    <location>
        <begin position="1"/>
        <end position="11"/>
    </location>
</feature>
<feature type="transmembrane region" description="Helical; Signal-anchor for type II membrane protein" evidence="7">
    <location>
        <begin position="12"/>
        <end position="28"/>
    </location>
</feature>
<feature type="topological domain" description="Lumenal" evidence="7">
    <location>
        <begin position="29"/>
        <end position="356"/>
    </location>
</feature>
<feature type="coiled-coil region" evidence="7">
    <location>
        <begin position="24"/>
        <end position="51"/>
    </location>
</feature>
<feature type="active site" evidence="4">
    <location>
        <position position="140"/>
    </location>
</feature>
<feature type="active site" evidence="2">
    <location>
        <position position="142"/>
    </location>
</feature>
<feature type="binding site" evidence="4">
    <location>
        <position position="83"/>
    </location>
    <ligand>
        <name>adenosine 3',5'-bisphosphate</name>
        <dbReference type="ChEBI" id="CHEBI:58343"/>
    </ligand>
</feature>
<feature type="binding site" evidence="4">
    <location>
        <position position="84"/>
    </location>
    <ligand>
        <name>adenosine 3',5'-bisphosphate</name>
        <dbReference type="ChEBI" id="CHEBI:58343"/>
    </ligand>
</feature>
<feature type="binding site" evidence="4">
    <location>
        <position position="85"/>
    </location>
    <ligand>
        <name>adenosine 3',5'-bisphosphate</name>
        <dbReference type="ChEBI" id="CHEBI:58343"/>
    </ligand>
</feature>
<feature type="binding site" evidence="4">
    <location>
        <position position="86"/>
    </location>
    <ligand>
        <name>adenosine 3',5'-bisphosphate</name>
        <dbReference type="ChEBI" id="CHEBI:58343"/>
    </ligand>
</feature>
<feature type="binding site" evidence="4">
    <location>
        <position position="87"/>
    </location>
    <ligand>
        <name>adenosine 3',5'-bisphosphate</name>
        <dbReference type="ChEBI" id="CHEBI:58343"/>
    </ligand>
</feature>
<feature type="binding site" evidence="4">
    <location>
        <position position="88"/>
    </location>
    <ligand>
        <name>adenosine 3',5'-bisphosphate</name>
        <dbReference type="ChEBI" id="CHEBI:58343"/>
    </ligand>
</feature>
<feature type="binding site" evidence="4">
    <location>
        <position position="164"/>
    </location>
    <ligand>
        <name>adenosine 3',5'-bisphosphate</name>
        <dbReference type="ChEBI" id="CHEBI:58343"/>
    </ligand>
</feature>
<feature type="binding site" evidence="4">
    <location>
        <position position="172"/>
    </location>
    <ligand>
        <name>adenosine 3',5'-bisphosphate</name>
        <dbReference type="ChEBI" id="CHEBI:58343"/>
    </ligand>
</feature>
<feature type="binding site" evidence="4">
    <location>
        <position position="279"/>
    </location>
    <ligand>
        <name>adenosine 3',5'-bisphosphate</name>
        <dbReference type="ChEBI" id="CHEBI:58343"/>
    </ligand>
</feature>
<feature type="binding site" evidence="4">
    <location>
        <position position="285"/>
    </location>
    <ligand>
        <name>adenosine 3',5'-bisphosphate</name>
        <dbReference type="ChEBI" id="CHEBI:58343"/>
    </ligand>
</feature>
<feature type="binding site" evidence="4">
    <location>
        <position position="290"/>
    </location>
    <ligand>
        <name>adenosine 3',5'-bisphosphate</name>
        <dbReference type="ChEBI" id="CHEBI:58343"/>
    </ligand>
</feature>
<feature type="binding site" evidence="4">
    <location>
        <position position="293"/>
    </location>
    <ligand>
        <name>adenosine 3',5'-bisphosphate</name>
        <dbReference type="ChEBI" id="CHEBI:58343"/>
    </ligand>
</feature>
<feature type="glycosylation site" description="N-linked (GlcNAc...) asparagine" evidence="7">
    <location>
        <position position="108"/>
    </location>
</feature>
<feature type="glycosylation site" description="N-linked (GlcNAc...) asparagine" evidence="7">
    <location>
        <position position="127"/>
    </location>
</feature>
<feature type="disulfide bond" evidence="4">
    <location>
        <begin position="201"/>
        <end position="209"/>
    </location>
</feature>
<feature type="disulfide bond" evidence="4">
    <location>
        <begin position="222"/>
        <end position="228"/>
    </location>
</feature>
<feature type="sequence conflict" description="In Ref. 1; CAH92556." evidence="8" ref="1">
    <original>C</original>
    <variation>R</variation>
    <location>
        <position position="228"/>
    </location>
</feature>
<gene>
    <name evidence="5" type="primary">HS2ST1</name>
    <name type="synonym">HS2ST</name>
</gene>
<accession>Q5R621</accession>
<accession>Q5R6Q4</accession>
<keyword id="KW-0175">Coiled coil</keyword>
<keyword id="KW-1015">Disulfide bond</keyword>
<keyword id="KW-0325">Glycoprotein</keyword>
<keyword id="KW-0333">Golgi apparatus</keyword>
<keyword id="KW-0472">Membrane</keyword>
<keyword id="KW-1185">Reference proteome</keyword>
<keyword id="KW-0735">Signal-anchor</keyword>
<keyword id="KW-0808">Transferase</keyword>
<keyword id="KW-0812">Transmembrane</keyword>
<keyword id="KW-1133">Transmembrane helix</keyword>
<proteinExistence type="evidence at transcript level"/>
<comment type="function">
    <text evidence="4 6">Catalyzes the transfer of a sulfo group from 3'-phospho-5'-adenylyl sulfate (PAPS) to the 2-OH position of iduronic acid (IdoA) or glucuronic acid (GlcA) within the heparan sulfate (HS) chain and participates in HS biosynthesis (By similarity). Required for metanephric development of kidney formation, suggesting that 2-O-sulfation within HS is essential for signaling between ureteric bud and metanephric mesenchyme (By similarity).</text>
</comment>
<comment type="subunit">
    <text evidence="1 4 6">Homotrimer (By similarity). Interacts with the C5-epimerase GLCE (By similarity).</text>
</comment>
<comment type="subcellular location">
    <subcellularLocation>
        <location evidence="6">Golgi apparatus membrane</location>
        <topology evidence="6">Single-pass type II membrane protein</topology>
    </subcellularLocation>
</comment>
<comment type="PTM">
    <text evidence="3">N-glycosylated.</text>
</comment>
<comment type="similarity">
    <text evidence="8">Belongs to the sulfotransferase 3 family.</text>
</comment>
<dbReference type="EC" id="2.8.2.-" evidence="6"/>
<dbReference type="EMBL" id="CR860431">
    <property type="protein sequence ID" value="CAH92556.1"/>
    <property type="molecule type" value="mRNA"/>
</dbReference>
<dbReference type="EMBL" id="CR860679">
    <property type="protein sequence ID" value="CAH92795.1"/>
    <property type="molecule type" value="mRNA"/>
</dbReference>
<dbReference type="RefSeq" id="NP_001126497.1">
    <property type="nucleotide sequence ID" value="NM_001133025.1"/>
</dbReference>
<dbReference type="SMR" id="Q5R621"/>
<dbReference type="FunCoup" id="Q5R621">
    <property type="interactions" value="2066"/>
</dbReference>
<dbReference type="STRING" id="9601.ENSPPYP00000001370"/>
<dbReference type="GlyCosmos" id="Q5R621">
    <property type="glycosylation" value="2 sites, No reported glycans"/>
</dbReference>
<dbReference type="Ensembl" id="ENSPPYT00000001415.2">
    <property type="protein sequence ID" value="ENSPPYP00000001370.2"/>
    <property type="gene ID" value="ENSPPYG00000001183.3"/>
</dbReference>
<dbReference type="GeneID" id="100173485"/>
<dbReference type="KEGG" id="pon:100173485"/>
<dbReference type="CTD" id="9653"/>
<dbReference type="eggNOG" id="KOG3922">
    <property type="taxonomic scope" value="Eukaryota"/>
</dbReference>
<dbReference type="GeneTree" id="ENSGT00530000063408"/>
<dbReference type="InParanoid" id="Q5R621"/>
<dbReference type="OMA" id="PNQIQFV"/>
<dbReference type="OrthoDB" id="10019582at2759"/>
<dbReference type="Proteomes" id="UP000001595">
    <property type="component" value="Chromosome 1"/>
</dbReference>
<dbReference type="GO" id="GO:0000139">
    <property type="term" value="C:Golgi membrane"/>
    <property type="evidence" value="ECO:0007669"/>
    <property type="project" value="UniProtKB-SubCell"/>
</dbReference>
<dbReference type="GO" id="GO:0004394">
    <property type="term" value="F:heparan sulfate 2-sulfotransferase activity"/>
    <property type="evidence" value="ECO:0000250"/>
    <property type="project" value="UniProtKB"/>
</dbReference>
<dbReference type="GO" id="GO:0010467">
    <property type="term" value="P:gene expression"/>
    <property type="evidence" value="ECO:0007669"/>
    <property type="project" value="Ensembl"/>
</dbReference>
<dbReference type="GO" id="GO:0015012">
    <property type="term" value="P:heparan sulfate proteoglycan biosynthetic process"/>
    <property type="evidence" value="ECO:0007669"/>
    <property type="project" value="Ensembl"/>
</dbReference>
<dbReference type="GO" id="GO:0030202">
    <property type="term" value="P:heparin proteoglycan metabolic process"/>
    <property type="evidence" value="ECO:0007669"/>
    <property type="project" value="Ensembl"/>
</dbReference>
<dbReference type="GO" id="GO:0060676">
    <property type="term" value="P:ureteric bud formation"/>
    <property type="evidence" value="ECO:0007669"/>
    <property type="project" value="Ensembl"/>
</dbReference>
<dbReference type="FunFam" id="3.40.50.300:FF:000534">
    <property type="entry name" value="Heparan sulfate 2-O-sulfotransferase 1"/>
    <property type="match status" value="1"/>
</dbReference>
<dbReference type="Gene3D" id="3.40.50.300">
    <property type="entry name" value="P-loop containing nucleotide triphosphate hydrolases"/>
    <property type="match status" value="1"/>
</dbReference>
<dbReference type="InterPro" id="IPR007734">
    <property type="entry name" value="Heparan_SO4_2-O-STrfase"/>
</dbReference>
<dbReference type="InterPro" id="IPR027417">
    <property type="entry name" value="P-loop_NTPase"/>
</dbReference>
<dbReference type="InterPro" id="IPR005331">
    <property type="entry name" value="Sulfotransferase"/>
</dbReference>
<dbReference type="PANTHER" id="PTHR12129">
    <property type="entry name" value="HEPARAN SULFATE 2-O-SULFOTRANSFERASE"/>
    <property type="match status" value="1"/>
</dbReference>
<dbReference type="PANTHER" id="PTHR12129:SF17">
    <property type="entry name" value="HEPARAN SULFATE 2-O-SULFOTRANSFERASE 1"/>
    <property type="match status" value="1"/>
</dbReference>
<dbReference type="Pfam" id="PF03567">
    <property type="entry name" value="Sulfotransfer_2"/>
    <property type="match status" value="1"/>
</dbReference>
<dbReference type="SUPFAM" id="SSF52540">
    <property type="entry name" value="P-loop containing nucleoside triphosphate hydrolases"/>
    <property type="match status" value="1"/>
</dbReference>
<name>HS2ST_PONAB</name>
<organism evidence="9">
    <name type="scientific">Pongo abelii</name>
    <name type="common">Sumatran orangutan</name>
    <name type="synonym">Pongo pygmaeus abelii</name>
    <dbReference type="NCBI Taxonomy" id="9601"/>
    <lineage>
        <taxon>Eukaryota</taxon>
        <taxon>Metazoa</taxon>
        <taxon>Chordata</taxon>
        <taxon>Craniata</taxon>
        <taxon>Vertebrata</taxon>
        <taxon>Euteleostomi</taxon>
        <taxon>Mammalia</taxon>
        <taxon>Eutheria</taxon>
        <taxon>Euarchontoglires</taxon>
        <taxon>Primates</taxon>
        <taxon>Haplorrhini</taxon>
        <taxon>Catarrhini</taxon>
        <taxon>Hominidae</taxon>
        <taxon>Pongo</taxon>
    </lineage>
</organism>